<reference key="1">
    <citation type="journal article" date="1995" name="J. Cell Biol.">
        <title>Spnr, a murine RNA binding protein that is localized to cytoplasmic microtubules.</title>
        <authorList>
            <person name="Schumacher J.M."/>
            <person name="Lee K."/>
            <person name="Edelhoff S."/>
            <person name="Braun R.E."/>
        </authorList>
    </citation>
    <scope>NUCLEOTIDE SEQUENCE [MRNA] (ISOFORM 2)</scope>
    <scope>FUNCTION</scope>
    <scope>RNA-BINDING</scope>
    <scope>TISSUE SPECIFICITY</scope>
    <source>
        <strain>CD-1</strain>
        <tissue>Testis</tissue>
    </source>
</reference>
<reference key="2">
    <citation type="journal article" date="2004" name="Genome Res.">
        <title>The status, quality, and expansion of the NIH full-length cDNA project: the Mammalian Gene Collection (MGC).</title>
        <authorList>
            <consortium name="The MGC Project Team"/>
        </authorList>
    </citation>
    <scope>NUCLEOTIDE SEQUENCE [LARGE SCALE MRNA] (ISOFORM 1)</scope>
    <source>
        <tissue>Eye</tissue>
    </source>
</reference>
<reference key="3">
    <citation type="journal article" date="1998" name="Biol. Reprod.">
        <title>Spermatid perinuclear ribonucleic acid-binding protein binds microtubules in vitro and associates with abnormal manchettes in vivo in mice.</title>
        <authorList>
            <person name="Schumacher J.M."/>
            <person name="Artzt K."/>
            <person name="Braun R.E."/>
        </authorList>
    </citation>
    <scope>INTERACTION WITH MICROTUBULES</scope>
    <scope>SUBCELLULAR LOCATION</scope>
</reference>
<reference key="4">
    <citation type="journal article" date="2001" name="Dev. Biol.">
        <title>Mice deficient for spermatid perinuclear RNA-binding protein show neurologic, spermatogenic, and sperm morphological abnormalities.</title>
        <authorList>
            <person name="Pires-daSilva A."/>
            <person name="Nayernia K."/>
            <person name="Engel W."/>
            <person name="Torres M."/>
            <person name="Stoykova A."/>
            <person name="Chowdhury K."/>
            <person name="Gruss P."/>
        </authorList>
    </citation>
    <scope>FUNCTION</scope>
    <scope>DEVELOPMENTAL STAGE</scope>
    <scope>SUBCELLULAR LOCATION</scope>
    <scope>TISSUE SPECIFICITY</scope>
</reference>
<reference key="5">
    <citation type="journal article" date="2005" name="BMC Dev. Biol.">
        <title>A genome-wide in situ hybridization map of RNA-binding proteins reveals anatomically restricted expression in the developing mouse brain.</title>
        <authorList>
            <person name="McKee A.E."/>
            <person name="Minet E."/>
            <person name="Stern C."/>
            <person name="Riahi S."/>
            <person name="Stiles C.D."/>
            <person name="Silver P.A."/>
        </authorList>
    </citation>
    <scope>DEVELOPMENTAL STAGE</scope>
</reference>
<reference key="6">
    <citation type="journal article" date="2010" name="Cell">
        <title>A tissue-specific atlas of mouse protein phosphorylation and expression.</title>
        <authorList>
            <person name="Huttlin E.L."/>
            <person name="Jedrychowski M.P."/>
            <person name="Elias J.E."/>
            <person name="Goswami T."/>
            <person name="Rad R."/>
            <person name="Beausoleil S.A."/>
            <person name="Villen J."/>
            <person name="Haas W."/>
            <person name="Sowa M.E."/>
            <person name="Gygi S.P."/>
        </authorList>
    </citation>
    <scope>IDENTIFICATION BY MASS SPECTROMETRY [LARGE SCALE ANALYSIS]</scope>
    <source>
        <tissue>Spleen</tissue>
    </source>
</reference>
<reference key="7">
    <citation type="journal article" date="2014" name="Mol. Cell. Proteomics">
        <title>Immunoaffinity enrichment and mass spectrometry analysis of protein methylation.</title>
        <authorList>
            <person name="Guo A."/>
            <person name="Gu H."/>
            <person name="Zhou J."/>
            <person name="Mulhern D."/>
            <person name="Wang Y."/>
            <person name="Lee K.A."/>
            <person name="Yang V."/>
            <person name="Aguiar M."/>
            <person name="Kornhauser J."/>
            <person name="Jia X."/>
            <person name="Ren J."/>
            <person name="Beausoleil S.A."/>
            <person name="Silva J.C."/>
            <person name="Vemulapalli V."/>
            <person name="Bedford M.T."/>
            <person name="Comb M.J."/>
        </authorList>
    </citation>
    <scope>METHYLATION [LARGE SCALE ANALYSIS] AT ARG-612 AND ARG-617</scope>
    <scope>IDENTIFICATION BY MASS SPECTROMETRY [LARGE SCALE ANALYSIS]</scope>
    <source>
        <tissue>Brain</tissue>
    </source>
</reference>
<comment type="function">
    <text evidence="1 5 7">Involved in spermatogenesis and sperm function. Plays a role in regulation of cell growth (By similarity). Binds to double-stranded DNA and RNA (By similarity). Binds most efficiently to poly(I:C) RNA than to poly(dI:dC) DNA (By similarity). Also binds to single-stranded poly(G) RNA (By similarity). Binds non-specifically to the mRNA PRM1 3'-UTR and adenovirus VA RNA.</text>
</comment>
<comment type="subunit">
    <text evidence="1 8">Interacts with EIF2AK2 (By similarity). Associates with microtubules; it is unsure whether such interaction is direct or indirect.</text>
</comment>
<comment type="subcellular location">
    <molecule>Isoform 2</molecule>
    <subcellularLocation>
        <location>Cytoplasm</location>
        <location>Cytoskeleton</location>
    </subcellularLocation>
    <text>Microtubule-associated that localizes to the manchette in developing spermatids.</text>
</comment>
<comment type="alternative products">
    <event type="alternative splicing"/>
    <isoform>
        <id>Q91WM1-1</id>
        <name>1</name>
        <sequence type="displayed"/>
    </isoform>
    <isoform>
        <id>Q91WM1-2</id>
        <name>2</name>
        <sequence type="described" ref="VSP_022938"/>
    </isoform>
</comment>
<comment type="tissue specificity">
    <text evidence="5 7">Isoform 2 is expressed in spermatocytes (at protein level). Expressed in testis, thymus, ovary, liver, kidney, heart, spleen and brain. Expressed in cortex, dentate gyrus and Purkinje cell layer and granule cells of the cerebellum.</text>
</comment>
<comment type="developmental stage">
    <text evidence="5 6">Expressed in brain at 13.5 dpc. Expressed in brain, trigeminal ganglia and nasal epithelium at 18.5 dpc.</text>
</comment>
<protein>
    <recommendedName>
        <fullName>Spermatid perinuclear RNA-binding protein</fullName>
    </recommendedName>
</protein>
<accession>Q91WM1</accession>
<accession>Q62262</accession>
<feature type="chain" id="PRO_0000274918" description="Spermatid perinuclear RNA-binding protein">
    <location>
        <begin position="1"/>
        <end position="672"/>
    </location>
</feature>
<feature type="domain" description="DZF" evidence="3">
    <location>
        <begin position="5"/>
        <end position="363"/>
    </location>
</feature>
<feature type="domain" description="DRBM 1" evidence="2">
    <location>
        <begin position="387"/>
        <end position="453"/>
    </location>
</feature>
<feature type="domain" description="DRBM 2" evidence="2">
    <location>
        <begin position="510"/>
        <end position="576"/>
    </location>
</feature>
<feature type="region of interest" description="Disordered" evidence="4">
    <location>
        <begin position="349"/>
        <end position="371"/>
    </location>
</feature>
<feature type="region of interest" description="Disordered" evidence="4">
    <location>
        <begin position="467"/>
        <end position="514"/>
    </location>
</feature>
<feature type="compositionally biased region" description="Basic and acidic residues" evidence="4">
    <location>
        <begin position="357"/>
        <end position="371"/>
    </location>
</feature>
<feature type="compositionally biased region" description="Basic and acidic residues" evidence="4">
    <location>
        <begin position="467"/>
        <end position="476"/>
    </location>
</feature>
<feature type="compositionally biased region" description="Low complexity" evidence="4">
    <location>
        <begin position="477"/>
        <end position="497"/>
    </location>
</feature>
<feature type="modified residue" description="Asymmetric dimethylarginine" evidence="10">
    <location>
        <position position="612"/>
    </location>
</feature>
<feature type="modified residue" description="Asymmetric dimethylarginine" evidence="10">
    <location>
        <position position="617"/>
    </location>
</feature>
<feature type="splice variant" id="VSP_022938" description="In isoform 2." evidence="9">
    <location>
        <begin position="649"/>
        <end position="672"/>
    </location>
</feature>
<name>STRBP_MOUSE</name>
<gene>
    <name type="primary">Strbp</name>
    <name type="synonym">Spnr</name>
</gene>
<dbReference type="EMBL" id="X84692">
    <property type="protein sequence ID" value="CAA59167.1"/>
    <property type="molecule type" value="mRNA"/>
</dbReference>
<dbReference type="EMBL" id="BC014710">
    <property type="protein sequence ID" value="AAH14710.1"/>
    <property type="molecule type" value="mRNA"/>
</dbReference>
<dbReference type="CCDS" id="CCDS38118.1">
    <molecule id="Q91WM1-1"/>
</dbReference>
<dbReference type="PIR" id="A57284">
    <property type="entry name" value="A57284"/>
</dbReference>
<dbReference type="RefSeq" id="NP_001342188.1">
    <molecule id="Q91WM1-1"/>
    <property type="nucleotide sequence ID" value="NM_001355259.1"/>
</dbReference>
<dbReference type="RefSeq" id="NP_001366243.1">
    <molecule id="Q91WM1-1"/>
    <property type="nucleotide sequence ID" value="NM_001379314.1"/>
</dbReference>
<dbReference type="RefSeq" id="NP_001366244.1">
    <molecule id="Q91WM1-1"/>
    <property type="nucleotide sequence ID" value="NM_001379315.1"/>
</dbReference>
<dbReference type="RefSeq" id="NP_001366245.1">
    <molecule id="Q91WM1-2"/>
    <property type="nucleotide sequence ID" value="NM_001379316.1"/>
</dbReference>
<dbReference type="RefSeq" id="NP_033287.2">
    <molecule id="Q91WM1-1"/>
    <property type="nucleotide sequence ID" value="NM_009261.4"/>
</dbReference>
<dbReference type="RefSeq" id="XP_011237348.1">
    <property type="nucleotide sequence ID" value="XM_011239046.2"/>
</dbReference>
<dbReference type="RefSeq" id="XP_011237349.1">
    <property type="nucleotide sequence ID" value="XM_011239047.2"/>
</dbReference>
<dbReference type="RefSeq" id="XP_017172309.1">
    <molecule id="Q91WM1-1"/>
    <property type="nucleotide sequence ID" value="XM_017316820.3"/>
</dbReference>
<dbReference type="RefSeq" id="XP_017172310.1">
    <property type="nucleotide sequence ID" value="XM_017316821.1"/>
</dbReference>
<dbReference type="RefSeq" id="XP_017172311.1">
    <property type="nucleotide sequence ID" value="XM_017316822.1"/>
</dbReference>
<dbReference type="RefSeq" id="XP_017172312.1">
    <molecule id="Q91WM1-1"/>
    <property type="nucleotide sequence ID" value="XM_017316823.2"/>
</dbReference>
<dbReference type="RefSeq" id="XP_030104850.1">
    <molecule id="Q91WM1-2"/>
    <property type="nucleotide sequence ID" value="XM_030248990.1"/>
</dbReference>
<dbReference type="RefSeq" id="XP_036015917.1">
    <molecule id="Q91WM1-1"/>
    <property type="nucleotide sequence ID" value="XM_036160024.1"/>
</dbReference>
<dbReference type="RefSeq" id="XP_036015926.1">
    <molecule id="Q91WM1-2"/>
    <property type="nucleotide sequence ID" value="XM_036160033.1"/>
</dbReference>
<dbReference type="SMR" id="Q91WM1"/>
<dbReference type="BioGRID" id="203463">
    <property type="interactions" value="5"/>
</dbReference>
<dbReference type="FunCoup" id="Q91WM1">
    <property type="interactions" value="2017"/>
</dbReference>
<dbReference type="IntAct" id="Q91WM1">
    <property type="interactions" value="2"/>
</dbReference>
<dbReference type="MINT" id="Q91WM1"/>
<dbReference type="STRING" id="10090.ENSMUSP00000028279"/>
<dbReference type="iPTMnet" id="Q91WM1"/>
<dbReference type="PhosphoSitePlus" id="Q91WM1"/>
<dbReference type="SwissPalm" id="Q91WM1"/>
<dbReference type="jPOST" id="Q91WM1"/>
<dbReference type="PaxDb" id="10090-ENSMUSP00000028279"/>
<dbReference type="PeptideAtlas" id="Q91WM1"/>
<dbReference type="ProteomicsDB" id="254599">
    <molecule id="Q91WM1-1"/>
</dbReference>
<dbReference type="ProteomicsDB" id="254600">
    <molecule id="Q91WM1-2"/>
</dbReference>
<dbReference type="Pumba" id="Q91WM1"/>
<dbReference type="Antibodypedia" id="16209">
    <property type="antibodies" value="78 antibodies from 21 providers"/>
</dbReference>
<dbReference type="DNASU" id="20744"/>
<dbReference type="Ensembl" id="ENSMUST00000028279.10">
    <molecule id="Q91WM1-1"/>
    <property type="protein sequence ID" value="ENSMUSP00000028279.4"/>
    <property type="gene ID" value="ENSMUSG00000026915.17"/>
</dbReference>
<dbReference type="Ensembl" id="ENSMUST00000072186.12">
    <molecule id="Q91WM1-1"/>
    <property type="protein sequence ID" value="ENSMUSP00000072047.6"/>
    <property type="gene ID" value="ENSMUSG00000026915.17"/>
</dbReference>
<dbReference type="Ensembl" id="ENSMUST00000183690.8">
    <molecule id="Q91WM1-2"/>
    <property type="protein sequence ID" value="ENSMUSP00000139145.2"/>
    <property type="gene ID" value="ENSMUSG00000026915.17"/>
</dbReference>
<dbReference type="GeneID" id="20744"/>
<dbReference type="KEGG" id="mmu:20744"/>
<dbReference type="UCSC" id="uc008jnc.2">
    <molecule id="Q91WM1-1"/>
    <property type="organism name" value="mouse"/>
</dbReference>
<dbReference type="AGR" id="MGI:104626"/>
<dbReference type="CTD" id="55342"/>
<dbReference type="MGI" id="MGI:104626">
    <property type="gene designation" value="Strbp"/>
</dbReference>
<dbReference type="VEuPathDB" id="HostDB:ENSMUSG00000026915"/>
<dbReference type="eggNOG" id="KOG3792">
    <property type="taxonomic scope" value="Eukaryota"/>
</dbReference>
<dbReference type="GeneTree" id="ENSGT00940000154687"/>
<dbReference type="HOGENOM" id="CLU_015490_1_0_1"/>
<dbReference type="InParanoid" id="Q91WM1"/>
<dbReference type="OMA" id="APLKGWX"/>
<dbReference type="OrthoDB" id="8898434at2759"/>
<dbReference type="PhylomeDB" id="Q91WM1"/>
<dbReference type="TreeFam" id="TF320194"/>
<dbReference type="BioGRID-ORCS" id="20744">
    <property type="hits" value="4 hits in 78 CRISPR screens"/>
</dbReference>
<dbReference type="ChiTaRS" id="Strbp">
    <property type="organism name" value="mouse"/>
</dbReference>
<dbReference type="PRO" id="PR:Q91WM1"/>
<dbReference type="Proteomes" id="UP000000589">
    <property type="component" value="Chromosome 2"/>
</dbReference>
<dbReference type="RNAct" id="Q91WM1">
    <property type="molecule type" value="protein"/>
</dbReference>
<dbReference type="Bgee" id="ENSMUSG00000026915">
    <property type="expression patterns" value="Expressed in embryonic post-anal tail and 268 other cell types or tissues"/>
</dbReference>
<dbReference type="ExpressionAtlas" id="Q91WM1">
    <property type="expression patterns" value="baseline and differential"/>
</dbReference>
<dbReference type="GO" id="GO:0005737">
    <property type="term" value="C:cytoplasm"/>
    <property type="evidence" value="ECO:0007669"/>
    <property type="project" value="UniProtKB-KW"/>
</dbReference>
<dbReference type="GO" id="GO:0002177">
    <property type="term" value="C:manchette"/>
    <property type="evidence" value="ECO:0000314"/>
    <property type="project" value="MGI"/>
</dbReference>
<dbReference type="GO" id="GO:0015630">
    <property type="term" value="C:microtubule cytoskeleton"/>
    <property type="evidence" value="ECO:0000314"/>
    <property type="project" value="MGI"/>
</dbReference>
<dbReference type="GO" id="GO:0005634">
    <property type="term" value="C:nucleus"/>
    <property type="evidence" value="ECO:0007669"/>
    <property type="project" value="Ensembl"/>
</dbReference>
<dbReference type="GO" id="GO:0003725">
    <property type="term" value="F:double-stranded RNA binding"/>
    <property type="evidence" value="ECO:0000314"/>
    <property type="project" value="MGI"/>
</dbReference>
<dbReference type="GO" id="GO:0008017">
    <property type="term" value="F:microtubule binding"/>
    <property type="evidence" value="ECO:0000314"/>
    <property type="project" value="MGI"/>
</dbReference>
<dbReference type="GO" id="GO:0003727">
    <property type="term" value="F:single-stranded RNA binding"/>
    <property type="evidence" value="ECO:0000314"/>
    <property type="project" value="MGI"/>
</dbReference>
<dbReference type="GO" id="GO:0015631">
    <property type="term" value="F:tubulin binding"/>
    <property type="evidence" value="ECO:0000314"/>
    <property type="project" value="MGI"/>
</dbReference>
<dbReference type="GO" id="GO:0048870">
    <property type="term" value="P:cell motility"/>
    <property type="evidence" value="ECO:0000315"/>
    <property type="project" value="MGI"/>
</dbReference>
<dbReference type="GO" id="GO:0007638">
    <property type="term" value="P:mechanosensory behavior"/>
    <property type="evidence" value="ECO:0000315"/>
    <property type="project" value="MGI"/>
</dbReference>
<dbReference type="GO" id="GO:0007286">
    <property type="term" value="P:spermatid development"/>
    <property type="evidence" value="ECO:0000315"/>
    <property type="project" value="MGI"/>
</dbReference>
<dbReference type="CDD" id="cd19897">
    <property type="entry name" value="DSRM_STRBP-like_rpt2"/>
    <property type="match status" value="1"/>
</dbReference>
<dbReference type="CDD" id="cd19909">
    <property type="entry name" value="DSRM_STRBP_rpt1"/>
    <property type="match status" value="1"/>
</dbReference>
<dbReference type="FunFam" id="1.10.1410.40:FF:000001">
    <property type="entry name" value="interleukin enhancer-binding factor 3 isoform X1"/>
    <property type="match status" value="1"/>
</dbReference>
<dbReference type="FunFam" id="3.30.160.20:FF:000006">
    <property type="entry name" value="interleukin enhancer-binding factor 3 isoform X2"/>
    <property type="match status" value="1"/>
</dbReference>
<dbReference type="FunFam" id="3.30.160.20:FF:000008">
    <property type="entry name" value="interleukin enhancer-binding factor 3 isoform X2"/>
    <property type="match status" value="1"/>
</dbReference>
<dbReference type="FunFam" id="3.30.460.10:FF:000003">
    <property type="entry name" value="interleukin enhancer-binding factor 3 isoform X2"/>
    <property type="match status" value="1"/>
</dbReference>
<dbReference type="Gene3D" id="1.10.1410.40">
    <property type="match status" value="1"/>
</dbReference>
<dbReference type="Gene3D" id="3.30.160.20">
    <property type="match status" value="2"/>
</dbReference>
<dbReference type="Gene3D" id="3.30.460.10">
    <property type="entry name" value="Beta Polymerase, domain 2"/>
    <property type="match status" value="1"/>
</dbReference>
<dbReference type="InterPro" id="IPR014720">
    <property type="entry name" value="dsRBD_dom"/>
</dbReference>
<dbReference type="InterPro" id="IPR006561">
    <property type="entry name" value="DZF_dom"/>
</dbReference>
<dbReference type="InterPro" id="IPR049402">
    <property type="entry name" value="DZF_dom_C"/>
</dbReference>
<dbReference type="InterPro" id="IPR049401">
    <property type="entry name" value="DZF_dom_N"/>
</dbReference>
<dbReference type="InterPro" id="IPR043519">
    <property type="entry name" value="NT_sf"/>
</dbReference>
<dbReference type="InterPro" id="IPR044472">
    <property type="entry name" value="STRBP_DSRM_1"/>
</dbReference>
<dbReference type="PANTHER" id="PTHR45762:SF1">
    <property type="entry name" value="SPERMATID PERINUCLEAR RNA-BINDING PROTEIN"/>
    <property type="match status" value="1"/>
</dbReference>
<dbReference type="PANTHER" id="PTHR45762">
    <property type="entry name" value="ZINC FINGER RNA-BINDING PROTEIN"/>
    <property type="match status" value="1"/>
</dbReference>
<dbReference type="Pfam" id="PF00035">
    <property type="entry name" value="dsrm"/>
    <property type="match status" value="2"/>
</dbReference>
<dbReference type="Pfam" id="PF20965">
    <property type="entry name" value="DZF_C"/>
    <property type="match status" value="1"/>
</dbReference>
<dbReference type="Pfam" id="PF07528">
    <property type="entry name" value="DZF_N"/>
    <property type="match status" value="1"/>
</dbReference>
<dbReference type="SMART" id="SM00358">
    <property type="entry name" value="DSRM"/>
    <property type="match status" value="2"/>
</dbReference>
<dbReference type="SMART" id="SM00572">
    <property type="entry name" value="DZF"/>
    <property type="match status" value="1"/>
</dbReference>
<dbReference type="SUPFAM" id="SSF54768">
    <property type="entry name" value="dsRNA-binding domain-like"/>
    <property type="match status" value="2"/>
</dbReference>
<dbReference type="PROSITE" id="PS50137">
    <property type="entry name" value="DS_RBD"/>
    <property type="match status" value="2"/>
</dbReference>
<dbReference type="PROSITE" id="PS51703">
    <property type="entry name" value="DZF"/>
    <property type="match status" value="1"/>
</dbReference>
<evidence type="ECO:0000250" key="1"/>
<evidence type="ECO:0000255" key="2">
    <source>
        <dbReference type="PROSITE-ProRule" id="PRU00266"/>
    </source>
</evidence>
<evidence type="ECO:0000255" key="3">
    <source>
        <dbReference type="PROSITE-ProRule" id="PRU01040"/>
    </source>
</evidence>
<evidence type="ECO:0000256" key="4">
    <source>
        <dbReference type="SAM" id="MobiDB-lite"/>
    </source>
</evidence>
<evidence type="ECO:0000269" key="5">
    <source>
    </source>
</evidence>
<evidence type="ECO:0000269" key="6">
    <source>
    </source>
</evidence>
<evidence type="ECO:0000269" key="7">
    <source>
    </source>
</evidence>
<evidence type="ECO:0000269" key="8">
    <source>
    </source>
</evidence>
<evidence type="ECO:0000303" key="9">
    <source>
    </source>
</evidence>
<evidence type="ECO:0007744" key="10">
    <source>
    </source>
</evidence>
<keyword id="KW-0025">Alternative splicing</keyword>
<keyword id="KW-0963">Cytoplasm</keyword>
<keyword id="KW-0206">Cytoskeleton</keyword>
<keyword id="KW-0217">Developmental protein</keyword>
<keyword id="KW-0221">Differentiation</keyword>
<keyword id="KW-0238">DNA-binding</keyword>
<keyword id="KW-0488">Methylation</keyword>
<keyword id="KW-1185">Reference proteome</keyword>
<keyword id="KW-0677">Repeat</keyword>
<keyword id="KW-0694">RNA-binding</keyword>
<keyword id="KW-0744">Spermatogenesis</keyword>
<proteinExistence type="evidence at protein level"/>
<organism>
    <name type="scientific">Mus musculus</name>
    <name type="common">Mouse</name>
    <dbReference type="NCBI Taxonomy" id="10090"/>
    <lineage>
        <taxon>Eukaryota</taxon>
        <taxon>Metazoa</taxon>
        <taxon>Chordata</taxon>
        <taxon>Craniata</taxon>
        <taxon>Vertebrata</taxon>
        <taxon>Euteleostomi</taxon>
        <taxon>Mammalia</taxon>
        <taxon>Eutheria</taxon>
        <taxon>Euarchontoglires</taxon>
        <taxon>Glires</taxon>
        <taxon>Rodentia</taxon>
        <taxon>Myomorpha</taxon>
        <taxon>Muroidea</taxon>
        <taxon>Muridae</taxon>
        <taxon>Murinae</taxon>
        <taxon>Mus</taxon>
        <taxon>Mus</taxon>
    </lineage>
</organism>
<sequence>MRSIRSFANDDRHVMVKHSTIYPSPEELEAVQNMVSTVECALKHVSDWLDETNKGTKPEGETEVKKDEAVENYSKDQGGRTLCGVMRIGLVAKGLLIKDDMDLELVLMCKDKPTETLLNTVKDNLPIQIQKLTEEKYQVEQCINEASIIIRNTKEPTLTLKVILTSPLIRDELEKKDGENVMMKDPPDLLDRQKCLNALASLRHAKWFQARANGLKSCVIVLRILRDLCNRVPTWAPLKGWPLELICEKSIGTCNRPLGAGEALRRVMECLASGILLPGGPGLHDPCERDPTDALSYMTTQQKEDITHSAQHALRLSAFGQIYKVLEMDPLPSSKPFQKYSWSVTDKEGAGSSALKRPFEDGLGDDKDPNKKMKRNLRKILDSKAIDLMNALMRLNQIRPGLQYKLLSQSGPVHAPVFTMSVDVDGTTYEASGPSKKTAKLHVAVKVLQAMGYPTGFDADIECISSDEKSDNESKNDTVSSNSSNNTGNSTTETSSTLEVRTQGPILTASGKNPVMELNEKRRGLKYELISETGGSHDKRFVMEVEVDGQKFRGAGPNKKVAKASAALAALEKLFSGPNAANNKKKKIIPQAKGVVNTAVSAAVQAVRGRGRGTLTRGAFVGATAAPGYIAPGYGTPYGYSTAAPAYGLPKRMVLLPVMKFPTYPVPHYSFF</sequence>